<protein>
    <recommendedName>
        <fullName evidence="1">Ribonuclease HII</fullName>
        <shortName evidence="1">RNase HII</shortName>
        <ecNumber evidence="1">3.1.26.4</ecNumber>
    </recommendedName>
</protein>
<name>RNH2_PYRAE</name>
<comment type="function">
    <text evidence="1">Endonuclease that specifically degrades the RNA of RNA-DNA hybrids.</text>
</comment>
<comment type="catalytic activity">
    <reaction evidence="1">
        <text>Endonucleolytic cleavage to 5'-phosphomonoester.</text>
        <dbReference type="EC" id="3.1.26.4"/>
    </reaction>
</comment>
<comment type="cofactor">
    <cofactor evidence="1">
        <name>Mn(2+)</name>
        <dbReference type="ChEBI" id="CHEBI:29035"/>
    </cofactor>
    <cofactor evidence="1">
        <name>Mg(2+)</name>
        <dbReference type="ChEBI" id="CHEBI:18420"/>
    </cofactor>
    <text evidence="1">Manganese or magnesium. Binds 1 divalent metal ion per monomer in the absence of substrate. May bind a second metal ion after substrate binding.</text>
</comment>
<comment type="subcellular location">
    <subcellularLocation>
        <location evidence="1">Cytoplasm</location>
    </subcellularLocation>
</comment>
<comment type="similarity">
    <text evidence="1">Belongs to the RNase HII family.</text>
</comment>
<feature type="chain" id="PRO_0000236284" description="Ribonuclease HII">
    <location>
        <begin position="1"/>
        <end position="212"/>
    </location>
</feature>
<feature type="domain" description="RNase H type-2" evidence="2">
    <location>
        <begin position="1"/>
        <end position="199"/>
    </location>
</feature>
<feature type="binding site" evidence="1">
    <location>
        <position position="6"/>
    </location>
    <ligand>
        <name>a divalent metal cation</name>
        <dbReference type="ChEBI" id="CHEBI:60240"/>
    </ligand>
</feature>
<feature type="binding site" evidence="1">
    <location>
        <position position="7"/>
    </location>
    <ligand>
        <name>a divalent metal cation</name>
        <dbReference type="ChEBI" id="CHEBI:60240"/>
    </ligand>
</feature>
<feature type="binding site" evidence="1">
    <location>
        <position position="101"/>
    </location>
    <ligand>
        <name>a divalent metal cation</name>
        <dbReference type="ChEBI" id="CHEBI:60240"/>
    </ligand>
</feature>
<reference key="1">
    <citation type="journal article" date="2002" name="Proc. Natl. Acad. Sci. U.S.A.">
        <title>Genome sequence of the hyperthermophilic crenarchaeon Pyrobaculum aerophilum.</title>
        <authorList>
            <person name="Fitz-Gibbon S.T."/>
            <person name="Ladner H."/>
            <person name="Kim U.-J."/>
            <person name="Stetter K.O."/>
            <person name="Simon M.I."/>
            <person name="Miller J.H."/>
        </authorList>
    </citation>
    <scope>NUCLEOTIDE SEQUENCE [LARGE SCALE GENOMIC DNA]</scope>
    <source>
        <strain>ATCC 51768 / DSM 7523 / JCM 9630 / CIP 104966 / NBRC 100827 / IM2</strain>
    </source>
</reference>
<gene>
    <name evidence="1" type="primary">rnhB</name>
    <name type="ordered locus">PAE1216</name>
</gene>
<proteinExistence type="inferred from homology"/>
<sequence length="212" mass="23194">MIGGIDEAGRGPVIGPMVIAIVVGESDDMIKIGVRDSKRLSPGAREAVYEKILRVAACVNYVVIEPAEIDAYVSRGMLNALELKYTAQLINLCPAEYYYVDSPDVNPKRYESGLVFATGKRVIALHKGEAVPQVAAASIVAKVVRDRLIQLLKKEVGDFGSGYPSDPRTLQRLREGRMPSECIRWQWKTVGGRIGLGRNRHESGENPGDSRG</sequence>
<accession>Q8ZXL6</accession>
<organism>
    <name type="scientific">Pyrobaculum aerophilum (strain ATCC 51768 / DSM 7523 / JCM 9630 / CIP 104966 / NBRC 100827 / IM2)</name>
    <dbReference type="NCBI Taxonomy" id="178306"/>
    <lineage>
        <taxon>Archaea</taxon>
        <taxon>Thermoproteota</taxon>
        <taxon>Thermoprotei</taxon>
        <taxon>Thermoproteales</taxon>
        <taxon>Thermoproteaceae</taxon>
        <taxon>Pyrobaculum</taxon>
    </lineage>
</organism>
<dbReference type="EC" id="3.1.26.4" evidence="1"/>
<dbReference type="EMBL" id="AE009441">
    <property type="protein sequence ID" value="AAL63331.1"/>
    <property type="molecule type" value="Genomic_DNA"/>
</dbReference>
<dbReference type="RefSeq" id="WP_011007803.1">
    <property type="nucleotide sequence ID" value="NC_003364.1"/>
</dbReference>
<dbReference type="SMR" id="Q8ZXL6"/>
<dbReference type="FunCoup" id="Q8ZXL6">
    <property type="interactions" value="114"/>
</dbReference>
<dbReference type="STRING" id="178306.PAE1216"/>
<dbReference type="EnsemblBacteria" id="AAL63331">
    <property type="protein sequence ID" value="AAL63331"/>
    <property type="gene ID" value="PAE1216"/>
</dbReference>
<dbReference type="GeneID" id="1465569"/>
<dbReference type="KEGG" id="pai:PAE1216"/>
<dbReference type="PATRIC" id="fig|178306.9.peg.899"/>
<dbReference type="eggNOG" id="arCOG04121">
    <property type="taxonomic scope" value="Archaea"/>
</dbReference>
<dbReference type="HOGENOM" id="CLU_036532_0_4_2"/>
<dbReference type="InParanoid" id="Q8ZXL6"/>
<dbReference type="Proteomes" id="UP000002439">
    <property type="component" value="Chromosome"/>
</dbReference>
<dbReference type="GO" id="GO:0005737">
    <property type="term" value="C:cytoplasm"/>
    <property type="evidence" value="ECO:0007669"/>
    <property type="project" value="UniProtKB-SubCell"/>
</dbReference>
<dbReference type="GO" id="GO:0032299">
    <property type="term" value="C:ribonuclease H2 complex"/>
    <property type="evidence" value="ECO:0000318"/>
    <property type="project" value="GO_Central"/>
</dbReference>
<dbReference type="GO" id="GO:0030145">
    <property type="term" value="F:manganese ion binding"/>
    <property type="evidence" value="ECO:0007669"/>
    <property type="project" value="UniProtKB-UniRule"/>
</dbReference>
<dbReference type="GO" id="GO:0003723">
    <property type="term" value="F:RNA binding"/>
    <property type="evidence" value="ECO:0007669"/>
    <property type="project" value="InterPro"/>
</dbReference>
<dbReference type="GO" id="GO:0004523">
    <property type="term" value="F:RNA-DNA hybrid ribonuclease activity"/>
    <property type="evidence" value="ECO:0000318"/>
    <property type="project" value="GO_Central"/>
</dbReference>
<dbReference type="GO" id="GO:0043137">
    <property type="term" value="P:DNA replication, removal of RNA primer"/>
    <property type="evidence" value="ECO:0000318"/>
    <property type="project" value="GO_Central"/>
</dbReference>
<dbReference type="GO" id="GO:0006298">
    <property type="term" value="P:mismatch repair"/>
    <property type="evidence" value="ECO:0000318"/>
    <property type="project" value="GO_Central"/>
</dbReference>
<dbReference type="CDD" id="cd07180">
    <property type="entry name" value="RNase_HII_archaea_like"/>
    <property type="match status" value="1"/>
</dbReference>
<dbReference type="Gene3D" id="3.30.420.10">
    <property type="entry name" value="Ribonuclease H-like superfamily/Ribonuclease H"/>
    <property type="match status" value="1"/>
</dbReference>
<dbReference type="HAMAP" id="MF_00052_A">
    <property type="entry name" value="RNase_HII_A"/>
    <property type="match status" value="1"/>
</dbReference>
<dbReference type="InterPro" id="IPR004649">
    <property type="entry name" value="RNase_H2_suA"/>
</dbReference>
<dbReference type="InterPro" id="IPR001352">
    <property type="entry name" value="RNase_HII/HIII"/>
</dbReference>
<dbReference type="InterPro" id="IPR024567">
    <property type="entry name" value="RNase_HII/HIII_dom"/>
</dbReference>
<dbReference type="InterPro" id="IPR020787">
    <property type="entry name" value="RNase_HII_arc"/>
</dbReference>
<dbReference type="InterPro" id="IPR012337">
    <property type="entry name" value="RNaseH-like_sf"/>
</dbReference>
<dbReference type="InterPro" id="IPR036397">
    <property type="entry name" value="RNaseH_sf"/>
</dbReference>
<dbReference type="NCBIfam" id="TIGR00729">
    <property type="entry name" value="ribonuclease HII"/>
    <property type="match status" value="1"/>
</dbReference>
<dbReference type="PANTHER" id="PTHR10954:SF23">
    <property type="entry name" value="RIBONUCLEASE"/>
    <property type="match status" value="1"/>
</dbReference>
<dbReference type="PANTHER" id="PTHR10954">
    <property type="entry name" value="RIBONUCLEASE H2 SUBUNIT A"/>
    <property type="match status" value="1"/>
</dbReference>
<dbReference type="Pfam" id="PF01351">
    <property type="entry name" value="RNase_HII"/>
    <property type="match status" value="1"/>
</dbReference>
<dbReference type="SUPFAM" id="SSF53098">
    <property type="entry name" value="Ribonuclease H-like"/>
    <property type="match status" value="1"/>
</dbReference>
<dbReference type="PROSITE" id="PS51975">
    <property type="entry name" value="RNASE_H_2"/>
    <property type="match status" value="1"/>
</dbReference>
<evidence type="ECO:0000255" key="1">
    <source>
        <dbReference type="HAMAP-Rule" id="MF_00052"/>
    </source>
</evidence>
<evidence type="ECO:0000255" key="2">
    <source>
        <dbReference type="PROSITE-ProRule" id="PRU01319"/>
    </source>
</evidence>
<keyword id="KW-0963">Cytoplasm</keyword>
<keyword id="KW-0255">Endonuclease</keyword>
<keyword id="KW-0378">Hydrolase</keyword>
<keyword id="KW-0464">Manganese</keyword>
<keyword id="KW-0479">Metal-binding</keyword>
<keyword id="KW-0540">Nuclease</keyword>
<keyword id="KW-1185">Reference proteome</keyword>